<sequence>MSERIIMDDAAIQRTVTRIAHEILEYNKGTDNLILLGIKTRGEYLANRIQDKIHQIEQQRIPTGTIDITYFRDDIEHMSSLTTKDAIDIDTDITDKVVIIIDDVLYTGRTVRASLDAILLNARPIKIGLAVLVDRGHRELPIRADFVGKNIPTSKEETVSVYLEEMDQRNAVIIK</sequence>
<protein>
    <recommendedName>
        <fullName evidence="1">Bifunctional protein PyrR</fullName>
    </recommendedName>
    <domain>
        <recommendedName>
            <fullName evidence="1">Pyrimidine operon regulatory protein</fullName>
        </recommendedName>
    </domain>
    <domain>
        <recommendedName>
            <fullName evidence="1">Uracil phosphoribosyltransferase</fullName>
            <shortName evidence="1">UPRTase</shortName>
            <ecNumber evidence="1">2.4.2.9</ecNumber>
        </recommendedName>
    </domain>
</protein>
<proteinExistence type="inferred from homology"/>
<keyword id="KW-0328">Glycosyltransferase</keyword>
<keyword id="KW-0694">RNA-binding</keyword>
<keyword id="KW-0804">Transcription</keyword>
<keyword id="KW-0805">Transcription regulation</keyword>
<keyword id="KW-0806">Transcription termination</keyword>
<keyword id="KW-0808">Transferase</keyword>
<dbReference type="EC" id="2.4.2.9" evidence="1"/>
<dbReference type="EMBL" id="AJ938182">
    <property type="protein sequence ID" value="CAI80751.1"/>
    <property type="molecule type" value="Genomic_DNA"/>
</dbReference>
<dbReference type="RefSeq" id="WP_000003872.1">
    <property type="nucleotide sequence ID" value="NC_007622.1"/>
</dbReference>
<dbReference type="SMR" id="Q2YXH0"/>
<dbReference type="KEGG" id="sab:SAB1062"/>
<dbReference type="HOGENOM" id="CLU_094234_2_1_9"/>
<dbReference type="GO" id="GO:0003723">
    <property type="term" value="F:RNA binding"/>
    <property type="evidence" value="ECO:0007669"/>
    <property type="project" value="UniProtKB-UniRule"/>
</dbReference>
<dbReference type="GO" id="GO:0004845">
    <property type="term" value="F:uracil phosphoribosyltransferase activity"/>
    <property type="evidence" value="ECO:0007669"/>
    <property type="project" value="UniProtKB-UniRule"/>
</dbReference>
<dbReference type="GO" id="GO:0006353">
    <property type="term" value="P:DNA-templated transcription termination"/>
    <property type="evidence" value="ECO:0007669"/>
    <property type="project" value="UniProtKB-UniRule"/>
</dbReference>
<dbReference type="CDD" id="cd06223">
    <property type="entry name" value="PRTases_typeI"/>
    <property type="match status" value="1"/>
</dbReference>
<dbReference type="FunFam" id="3.40.50.2020:FF:000020">
    <property type="entry name" value="Bifunctional protein PyrR"/>
    <property type="match status" value="1"/>
</dbReference>
<dbReference type="Gene3D" id="3.40.50.2020">
    <property type="match status" value="1"/>
</dbReference>
<dbReference type="HAMAP" id="MF_01219">
    <property type="entry name" value="PyrR"/>
    <property type="match status" value="1"/>
</dbReference>
<dbReference type="InterPro" id="IPR000836">
    <property type="entry name" value="PRibTrfase_dom"/>
</dbReference>
<dbReference type="InterPro" id="IPR029057">
    <property type="entry name" value="PRTase-like"/>
</dbReference>
<dbReference type="InterPro" id="IPR023050">
    <property type="entry name" value="PyrR"/>
</dbReference>
<dbReference type="InterPro" id="IPR050137">
    <property type="entry name" value="PyrR_bifunctional"/>
</dbReference>
<dbReference type="NCBIfam" id="NF003546">
    <property type="entry name" value="PRK05205.1-2"/>
    <property type="match status" value="1"/>
</dbReference>
<dbReference type="NCBIfam" id="NF003548">
    <property type="entry name" value="PRK05205.1-4"/>
    <property type="match status" value="1"/>
</dbReference>
<dbReference type="NCBIfam" id="NF003549">
    <property type="entry name" value="PRK05205.1-5"/>
    <property type="match status" value="1"/>
</dbReference>
<dbReference type="PANTHER" id="PTHR11608">
    <property type="entry name" value="BIFUNCTIONAL PROTEIN PYRR"/>
    <property type="match status" value="1"/>
</dbReference>
<dbReference type="PANTHER" id="PTHR11608:SF0">
    <property type="entry name" value="BIFUNCTIONAL PROTEIN PYRR"/>
    <property type="match status" value="1"/>
</dbReference>
<dbReference type="Pfam" id="PF00156">
    <property type="entry name" value="Pribosyltran"/>
    <property type="match status" value="1"/>
</dbReference>
<dbReference type="SUPFAM" id="SSF53271">
    <property type="entry name" value="PRTase-like"/>
    <property type="match status" value="1"/>
</dbReference>
<comment type="function">
    <text evidence="1">Regulates transcriptional attenuation of the pyrimidine nucleotide (pyr) operon by binding in a uridine-dependent manner to specific sites on pyr mRNA. This disrupts an antiterminator hairpin in the RNA and favors formation of a downstream transcription terminator, leading to a reduced expression of downstream genes.</text>
</comment>
<comment type="function">
    <text evidence="1">Also displays a weak uracil phosphoribosyltransferase activity which is not physiologically significant.</text>
</comment>
<comment type="catalytic activity">
    <reaction evidence="1">
        <text>UMP + diphosphate = 5-phospho-alpha-D-ribose 1-diphosphate + uracil</text>
        <dbReference type="Rhea" id="RHEA:13017"/>
        <dbReference type="ChEBI" id="CHEBI:17568"/>
        <dbReference type="ChEBI" id="CHEBI:33019"/>
        <dbReference type="ChEBI" id="CHEBI:57865"/>
        <dbReference type="ChEBI" id="CHEBI:58017"/>
        <dbReference type="EC" id="2.4.2.9"/>
    </reaction>
</comment>
<comment type="subunit">
    <text evidence="1">Homodimer and homohexamer; in equilibrium.</text>
</comment>
<comment type="similarity">
    <text evidence="1">Belongs to the purine/pyrimidine phosphoribosyltransferase family. PyrR subfamily.</text>
</comment>
<evidence type="ECO:0000255" key="1">
    <source>
        <dbReference type="HAMAP-Rule" id="MF_01219"/>
    </source>
</evidence>
<organism>
    <name type="scientific">Staphylococcus aureus (strain bovine RF122 / ET3-1)</name>
    <dbReference type="NCBI Taxonomy" id="273036"/>
    <lineage>
        <taxon>Bacteria</taxon>
        <taxon>Bacillati</taxon>
        <taxon>Bacillota</taxon>
        <taxon>Bacilli</taxon>
        <taxon>Bacillales</taxon>
        <taxon>Staphylococcaceae</taxon>
        <taxon>Staphylococcus</taxon>
    </lineage>
</organism>
<name>PYRR_STAAB</name>
<feature type="chain" id="PRO_1000053864" description="Bifunctional protein PyrR">
    <location>
        <begin position="1"/>
        <end position="175"/>
    </location>
</feature>
<feature type="short sequence motif" description="PRPP-binding" evidence="1">
    <location>
        <begin position="98"/>
        <end position="110"/>
    </location>
</feature>
<gene>
    <name evidence="1" type="primary">pyrR</name>
    <name type="ordered locus">SAB1062</name>
</gene>
<accession>Q2YXH0</accession>
<reference key="1">
    <citation type="journal article" date="2007" name="PLoS ONE">
        <title>Molecular correlates of host specialization in Staphylococcus aureus.</title>
        <authorList>
            <person name="Herron-Olson L."/>
            <person name="Fitzgerald J.R."/>
            <person name="Musser J.M."/>
            <person name="Kapur V."/>
        </authorList>
    </citation>
    <scope>NUCLEOTIDE SEQUENCE [LARGE SCALE GENOMIC DNA]</scope>
    <source>
        <strain>bovine RF122 / ET3-1</strain>
    </source>
</reference>